<evidence type="ECO:0000255" key="1">
    <source>
        <dbReference type="HAMAP-Rule" id="MF_00222"/>
    </source>
</evidence>
<gene>
    <name evidence="1" type="primary">aroE</name>
    <name type="ordered locus">Veis_2197</name>
</gene>
<sequence length="288" mass="29941">MRQTADLYCVLGNPIAHSRSPAIHARFAELTGERIRYERRLLPIDGFARGLRDFAAQGGRGCSVTVPFKTEALRCATACSERAQLAGAANTLSLHADGSISADNTDGLGLVADITRNAGIALAGCDVLLVGAGGAAAGVLGPLLHAGVRHITVANRTLAKAQALVQSHSALAALRKTQLKACGLQAPLADFDIIINASASSLAGADVPVPASVLRPASLAYDMMYGPAAQGFLDWARRHGARPRDGLGMLVEQAAEAFWLWRGLRPPSAQVLAELQEAAAKPASGADR</sequence>
<keyword id="KW-0028">Amino-acid biosynthesis</keyword>
<keyword id="KW-0057">Aromatic amino acid biosynthesis</keyword>
<keyword id="KW-0521">NADP</keyword>
<keyword id="KW-0560">Oxidoreductase</keyword>
<keyword id="KW-1185">Reference proteome</keyword>
<proteinExistence type="inferred from homology"/>
<feature type="chain" id="PRO_0000325182" description="Shikimate dehydrogenase (NADP(+))">
    <location>
        <begin position="1"/>
        <end position="288"/>
    </location>
</feature>
<feature type="active site" description="Proton acceptor" evidence="1">
    <location>
        <position position="69"/>
    </location>
</feature>
<feature type="binding site" evidence="1">
    <location>
        <begin position="18"/>
        <end position="20"/>
    </location>
    <ligand>
        <name>shikimate</name>
        <dbReference type="ChEBI" id="CHEBI:36208"/>
    </ligand>
</feature>
<feature type="binding site" evidence="1">
    <location>
        <position position="65"/>
    </location>
    <ligand>
        <name>shikimate</name>
        <dbReference type="ChEBI" id="CHEBI:36208"/>
    </ligand>
</feature>
<feature type="binding site" evidence="1">
    <location>
        <position position="81"/>
    </location>
    <ligand>
        <name>NADP(+)</name>
        <dbReference type="ChEBI" id="CHEBI:58349"/>
    </ligand>
</feature>
<feature type="binding site" evidence="1">
    <location>
        <position position="90"/>
    </location>
    <ligand>
        <name>shikimate</name>
        <dbReference type="ChEBI" id="CHEBI:36208"/>
    </ligand>
</feature>
<feature type="binding site" evidence="1">
    <location>
        <position position="106"/>
    </location>
    <ligand>
        <name>shikimate</name>
        <dbReference type="ChEBI" id="CHEBI:36208"/>
    </ligand>
</feature>
<feature type="binding site" evidence="1">
    <location>
        <begin position="131"/>
        <end position="135"/>
    </location>
    <ligand>
        <name>NADP(+)</name>
        <dbReference type="ChEBI" id="CHEBI:58349"/>
    </ligand>
</feature>
<feature type="binding site" evidence="1">
    <location>
        <begin position="155"/>
        <end position="160"/>
    </location>
    <ligand>
        <name>NADP(+)</name>
        <dbReference type="ChEBI" id="CHEBI:58349"/>
    </ligand>
</feature>
<feature type="binding site" evidence="1">
    <location>
        <position position="223"/>
    </location>
    <ligand>
        <name>NADP(+)</name>
        <dbReference type="ChEBI" id="CHEBI:58349"/>
    </ligand>
</feature>
<feature type="binding site" evidence="1">
    <location>
        <position position="225"/>
    </location>
    <ligand>
        <name>shikimate</name>
        <dbReference type="ChEBI" id="CHEBI:36208"/>
    </ligand>
</feature>
<feature type="binding site" evidence="1">
    <location>
        <position position="246"/>
    </location>
    <ligand>
        <name>NADP(+)</name>
        <dbReference type="ChEBI" id="CHEBI:58349"/>
    </ligand>
</feature>
<dbReference type="EC" id="1.1.1.25" evidence="1"/>
<dbReference type="EMBL" id="CP000542">
    <property type="protein sequence ID" value="ABM57945.1"/>
    <property type="molecule type" value="Genomic_DNA"/>
</dbReference>
<dbReference type="RefSeq" id="WP_011809951.1">
    <property type="nucleotide sequence ID" value="NC_008786.1"/>
</dbReference>
<dbReference type="SMR" id="A1WJY8"/>
<dbReference type="STRING" id="391735.Veis_2197"/>
<dbReference type="GeneID" id="76460765"/>
<dbReference type="KEGG" id="vei:Veis_2197"/>
<dbReference type="eggNOG" id="COG0169">
    <property type="taxonomic scope" value="Bacteria"/>
</dbReference>
<dbReference type="HOGENOM" id="CLU_044063_2_1_4"/>
<dbReference type="OrthoDB" id="9776868at2"/>
<dbReference type="UniPathway" id="UPA00053">
    <property type="reaction ID" value="UER00087"/>
</dbReference>
<dbReference type="Proteomes" id="UP000000374">
    <property type="component" value="Chromosome"/>
</dbReference>
<dbReference type="GO" id="GO:0005829">
    <property type="term" value="C:cytosol"/>
    <property type="evidence" value="ECO:0007669"/>
    <property type="project" value="TreeGrafter"/>
</dbReference>
<dbReference type="GO" id="GO:0050661">
    <property type="term" value="F:NADP binding"/>
    <property type="evidence" value="ECO:0007669"/>
    <property type="project" value="InterPro"/>
</dbReference>
<dbReference type="GO" id="GO:0004764">
    <property type="term" value="F:shikimate 3-dehydrogenase (NADP+) activity"/>
    <property type="evidence" value="ECO:0007669"/>
    <property type="project" value="UniProtKB-UniRule"/>
</dbReference>
<dbReference type="GO" id="GO:0008652">
    <property type="term" value="P:amino acid biosynthetic process"/>
    <property type="evidence" value="ECO:0007669"/>
    <property type="project" value="UniProtKB-KW"/>
</dbReference>
<dbReference type="GO" id="GO:0009073">
    <property type="term" value="P:aromatic amino acid family biosynthetic process"/>
    <property type="evidence" value="ECO:0007669"/>
    <property type="project" value="UniProtKB-KW"/>
</dbReference>
<dbReference type="GO" id="GO:0009423">
    <property type="term" value="P:chorismate biosynthetic process"/>
    <property type="evidence" value="ECO:0007669"/>
    <property type="project" value="UniProtKB-UniRule"/>
</dbReference>
<dbReference type="GO" id="GO:0019632">
    <property type="term" value="P:shikimate metabolic process"/>
    <property type="evidence" value="ECO:0007669"/>
    <property type="project" value="InterPro"/>
</dbReference>
<dbReference type="CDD" id="cd01065">
    <property type="entry name" value="NAD_bind_Shikimate_DH"/>
    <property type="match status" value="1"/>
</dbReference>
<dbReference type="FunFam" id="3.40.50.10860:FF:000006">
    <property type="entry name" value="Shikimate dehydrogenase (NADP(+))"/>
    <property type="match status" value="1"/>
</dbReference>
<dbReference type="Gene3D" id="3.40.50.10860">
    <property type="entry name" value="Leucine Dehydrogenase, chain A, domain 1"/>
    <property type="match status" value="1"/>
</dbReference>
<dbReference type="Gene3D" id="3.40.50.720">
    <property type="entry name" value="NAD(P)-binding Rossmann-like Domain"/>
    <property type="match status" value="1"/>
</dbReference>
<dbReference type="HAMAP" id="MF_00222">
    <property type="entry name" value="Shikimate_DH_AroE"/>
    <property type="match status" value="1"/>
</dbReference>
<dbReference type="InterPro" id="IPR046346">
    <property type="entry name" value="Aminoacid_DH-like_N_sf"/>
</dbReference>
<dbReference type="InterPro" id="IPR036291">
    <property type="entry name" value="NAD(P)-bd_dom_sf"/>
</dbReference>
<dbReference type="InterPro" id="IPR041121">
    <property type="entry name" value="SDH_C"/>
</dbReference>
<dbReference type="InterPro" id="IPR011342">
    <property type="entry name" value="Shikimate_DH"/>
</dbReference>
<dbReference type="InterPro" id="IPR013708">
    <property type="entry name" value="Shikimate_DH-bd_N"/>
</dbReference>
<dbReference type="InterPro" id="IPR022893">
    <property type="entry name" value="Shikimate_DH_fam"/>
</dbReference>
<dbReference type="InterPro" id="IPR006151">
    <property type="entry name" value="Shikm_DH/Glu-tRNA_Rdtase"/>
</dbReference>
<dbReference type="NCBIfam" id="TIGR00507">
    <property type="entry name" value="aroE"/>
    <property type="match status" value="1"/>
</dbReference>
<dbReference type="NCBIfam" id="NF001310">
    <property type="entry name" value="PRK00258.1-2"/>
    <property type="match status" value="1"/>
</dbReference>
<dbReference type="PANTHER" id="PTHR21089:SF1">
    <property type="entry name" value="BIFUNCTIONAL 3-DEHYDROQUINATE DEHYDRATASE_SHIKIMATE DEHYDROGENASE, CHLOROPLASTIC"/>
    <property type="match status" value="1"/>
</dbReference>
<dbReference type="PANTHER" id="PTHR21089">
    <property type="entry name" value="SHIKIMATE DEHYDROGENASE"/>
    <property type="match status" value="1"/>
</dbReference>
<dbReference type="Pfam" id="PF18317">
    <property type="entry name" value="SDH_C"/>
    <property type="match status" value="1"/>
</dbReference>
<dbReference type="Pfam" id="PF01488">
    <property type="entry name" value="Shikimate_DH"/>
    <property type="match status" value="1"/>
</dbReference>
<dbReference type="Pfam" id="PF08501">
    <property type="entry name" value="Shikimate_dh_N"/>
    <property type="match status" value="1"/>
</dbReference>
<dbReference type="SUPFAM" id="SSF53223">
    <property type="entry name" value="Aminoacid dehydrogenase-like, N-terminal domain"/>
    <property type="match status" value="1"/>
</dbReference>
<dbReference type="SUPFAM" id="SSF51735">
    <property type="entry name" value="NAD(P)-binding Rossmann-fold domains"/>
    <property type="match status" value="1"/>
</dbReference>
<name>AROE_VEREI</name>
<organism>
    <name type="scientific">Verminephrobacter eiseniae (strain EF01-2)</name>
    <dbReference type="NCBI Taxonomy" id="391735"/>
    <lineage>
        <taxon>Bacteria</taxon>
        <taxon>Pseudomonadati</taxon>
        <taxon>Pseudomonadota</taxon>
        <taxon>Betaproteobacteria</taxon>
        <taxon>Burkholderiales</taxon>
        <taxon>Comamonadaceae</taxon>
        <taxon>Verminephrobacter</taxon>
    </lineage>
</organism>
<comment type="function">
    <text evidence="1">Involved in the biosynthesis of the chorismate, which leads to the biosynthesis of aromatic amino acids. Catalyzes the reversible NADPH linked reduction of 3-dehydroshikimate (DHSA) to yield shikimate (SA).</text>
</comment>
<comment type="catalytic activity">
    <reaction evidence="1">
        <text>shikimate + NADP(+) = 3-dehydroshikimate + NADPH + H(+)</text>
        <dbReference type="Rhea" id="RHEA:17737"/>
        <dbReference type="ChEBI" id="CHEBI:15378"/>
        <dbReference type="ChEBI" id="CHEBI:16630"/>
        <dbReference type="ChEBI" id="CHEBI:36208"/>
        <dbReference type="ChEBI" id="CHEBI:57783"/>
        <dbReference type="ChEBI" id="CHEBI:58349"/>
        <dbReference type="EC" id="1.1.1.25"/>
    </reaction>
</comment>
<comment type="pathway">
    <text evidence="1">Metabolic intermediate biosynthesis; chorismate biosynthesis; chorismate from D-erythrose 4-phosphate and phosphoenolpyruvate: step 4/7.</text>
</comment>
<comment type="subunit">
    <text evidence="1">Homodimer.</text>
</comment>
<comment type="similarity">
    <text evidence="1">Belongs to the shikimate dehydrogenase family.</text>
</comment>
<protein>
    <recommendedName>
        <fullName evidence="1">Shikimate dehydrogenase (NADP(+))</fullName>
        <shortName evidence="1">SDH</shortName>
        <ecNumber evidence="1">1.1.1.25</ecNumber>
    </recommendedName>
</protein>
<reference key="1">
    <citation type="submission" date="2006-12" db="EMBL/GenBank/DDBJ databases">
        <title>Complete sequence of chromosome 1 of Verminephrobacter eiseniae EF01-2.</title>
        <authorList>
            <person name="Copeland A."/>
            <person name="Lucas S."/>
            <person name="Lapidus A."/>
            <person name="Barry K."/>
            <person name="Detter J.C."/>
            <person name="Glavina del Rio T."/>
            <person name="Dalin E."/>
            <person name="Tice H."/>
            <person name="Pitluck S."/>
            <person name="Chertkov O."/>
            <person name="Brettin T."/>
            <person name="Bruce D."/>
            <person name="Han C."/>
            <person name="Tapia R."/>
            <person name="Gilna P."/>
            <person name="Schmutz J."/>
            <person name="Larimer F."/>
            <person name="Land M."/>
            <person name="Hauser L."/>
            <person name="Kyrpides N."/>
            <person name="Kim E."/>
            <person name="Stahl D."/>
            <person name="Richardson P."/>
        </authorList>
    </citation>
    <scope>NUCLEOTIDE SEQUENCE [LARGE SCALE GENOMIC DNA]</scope>
    <source>
        <strain>EF01-2</strain>
    </source>
</reference>
<accession>A1WJY8</accession>